<gene>
    <name type="primary">GDS</name>
</gene>
<feature type="chain" id="PRO_0000399253" description="Germacrene-D synthase">
    <location>
        <begin position="1"/>
        <end position="546"/>
    </location>
</feature>
<feature type="short sequence motif" description="DDXXD motif">
    <location>
        <begin position="303"/>
        <end position="307"/>
    </location>
</feature>
<feature type="binding site" evidence="1">
    <location>
        <position position="303"/>
    </location>
    <ligand>
        <name>Mg(2+)</name>
        <dbReference type="ChEBI" id="CHEBI:18420"/>
        <label>1</label>
    </ligand>
</feature>
<feature type="binding site" evidence="1">
    <location>
        <position position="303"/>
    </location>
    <ligand>
        <name>Mg(2+)</name>
        <dbReference type="ChEBI" id="CHEBI:18420"/>
        <label>2</label>
    </ligand>
</feature>
<feature type="binding site" evidence="1">
    <location>
        <position position="307"/>
    </location>
    <ligand>
        <name>Mg(2+)</name>
        <dbReference type="ChEBI" id="CHEBI:18420"/>
        <label>1</label>
    </ligand>
</feature>
<feature type="binding site" evidence="1">
    <location>
        <position position="307"/>
    </location>
    <ligand>
        <name>Mg(2+)</name>
        <dbReference type="ChEBI" id="CHEBI:18420"/>
        <label>2</label>
    </ligand>
</feature>
<feature type="binding site" evidence="1">
    <location>
        <position position="448"/>
    </location>
    <ligand>
        <name>Mg(2+)</name>
        <dbReference type="ChEBI" id="CHEBI:18420"/>
        <label>3</label>
    </ligand>
</feature>
<feature type="binding site" evidence="1">
    <location>
        <position position="456"/>
    </location>
    <ligand>
        <name>Mg(2+)</name>
        <dbReference type="ChEBI" id="CHEBI:18420"/>
        <label>3</label>
    </ligand>
</feature>
<comment type="function">
    <text evidence="2">Sesquiterpene synthase that catalyzes the formation of germacrene D from trans,trans-farnesyl diphosphate (FPP).</text>
</comment>
<comment type="catalytic activity">
    <reaction evidence="2">
        <text>(2E,6E)-farnesyl diphosphate = (-)-germacrene D + diphosphate</text>
        <dbReference type="Rhea" id="RHEA:12016"/>
        <dbReference type="ChEBI" id="CHEBI:33019"/>
        <dbReference type="ChEBI" id="CHEBI:49044"/>
        <dbReference type="ChEBI" id="CHEBI:175763"/>
        <dbReference type="EC" id="4.2.3.75"/>
    </reaction>
</comment>
<comment type="cofactor">
    <cofactor evidence="1">
        <name>Mg(2+)</name>
        <dbReference type="ChEBI" id="CHEBI:18420"/>
    </cofactor>
    <cofactor evidence="1">
        <name>Mn(2+)</name>
        <dbReference type="ChEBI" id="CHEBI:29035"/>
    </cofactor>
    <text evidence="1">Binds 3 Mg(2+) or Mn(2+) ions per subunit.</text>
</comment>
<comment type="pathway">
    <text>Secondary metabolite biosynthesis; terpenoid biosynthesis.</text>
</comment>
<comment type="domain">
    <text>The Asp-Asp-Xaa-Xaa-Asp/Glu (DDXXD/E) motif is important for the catalytic activity, presumably through binding to Mg(2+).</text>
</comment>
<comment type="similarity">
    <text evidence="3">Belongs to the terpene synthase family.</text>
</comment>
<protein>
    <recommendedName>
        <fullName>Germacrene-D synthase</fullName>
        <ecNumber>4.2.3.75</ecNumber>
    </recommendedName>
    <alternativeName>
        <fullName>(-)-germacrene D synthase</fullName>
    </alternativeName>
</protein>
<keyword id="KW-0456">Lyase</keyword>
<keyword id="KW-0460">Magnesium</keyword>
<keyword id="KW-0479">Metal-binding</keyword>
<accession>Q5SBP6</accession>
<organism>
    <name type="scientific">Ocimum basilicum</name>
    <name type="common">Sweet basil</name>
    <dbReference type="NCBI Taxonomy" id="39350"/>
    <lineage>
        <taxon>Eukaryota</taxon>
        <taxon>Viridiplantae</taxon>
        <taxon>Streptophyta</taxon>
        <taxon>Embryophyta</taxon>
        <taxon>Tracheophyta</taxon>
        <taxon>Spermatophyta</taxon>
        <taxon>Magnoliopsida</taxon>
        <taxon>eudicotyledons</taxon>
        <taxon>Gunneridae</taxon>
        <taxon>Pentapetalae</taxon>
        <taxon>asterids</taxon>
        <taxon>lamiids</taxon>
        <taxon>Lamiales</taxon>
        <taxon>Lamiaceae</taxon>
        <taxon>Nepetoideae</taxon>
        <taxon>Ocimeae</taxon>
        <taxon>Ociminae</taxon>
        <taxon>Ocimum</taxon>
    </lineage>
</organism>
<proteinExistence type="evidence at protein level"/>
<reference key="1">
    <citation type="journal article" date="2004" name="Plant Physiol.">
        <title>The biochemical and molecular basis for the divergent patterns in the biosynthesis of terpenes and phenylpropenes in the peltate glands of three cultivars of basil.</title>
        <authorList>
            <person name="Iijima Y."/>
            <person name="Davidovich-Rikanati R."/>
            <person name="Fridman E."/>
            <person name="Gang D.R."/>
            <person name="Bar E."/>
            <person name="Lewinsohn E."/>
            <person name="Pichersky E."/>
        </authorList>
    </citation>
    <scope>NUCLEOTIDE SEQUENCE [MRNA]</scope>
    <scope>FUNCTION</scope>
    <scope>CATALYTIC ACTIVITY</scope>
</reference>
<sequence>MTNMFASAAPISTNNTTVEDMRRSVTYHPSVWKDHFLDYASGITEVEMEQLQKQKERIKTLLAQTLDDFVLKIELIDAIQRLGVGYHFEKEINHSLRQIYDTFQISSKDNDIRVVALRFRLLRQHGYPVPSDVFKKFIDNQGRLDESVMNNVEGMLSLYEASNYGMEGEDILDKALEISTSHLEPLASRSRRINEALEMPISKTLVRLGARKFISIYEEDESRDEDLLKFAKLDFNILQKIHQEELTHIARWWKELDLGNKLPFARDRVVECYFWILGVYFEPQYNIARRFMTKVIAMTSIIDDIYDVHGTLEELQRFTDAIRSWDIRAIDELPPYMRLCYEALLGMYAEMENEMVKQNQSYRIEYARQEMIKLVTTYMEEAKWCYSKYIPNMDEYMKLALVSGAYMMLATTSLVGILGDPITKQDFDWITNEPPILRAASVICRLMDDVVGHGIEQKISSVDCYMKENGCSKMEAVGEFSKRVKKAWKNLNEEWVEPRAASMVILVRVVNLARVINLLYVGEDSYGNSSVKTKELIKGVLVHPIK</sequence>
<dbReference type="EC" id="4.2.3.75"/>
<dbReference type="EMBL" id="AY693644">
    <property type="protein sequence ID" value="AAV63786.1"/>
    <property type="molecule type" value="mRNA"/>
</dbReference>
<dbReference type="SMR" id="Q5SBP6"/>
<dbReference type="UniPathway" id="UPA00213"/>
<dbReference type="GO" id="GO:0052577">
    <property type="term" value="F:germacrene-D synthase activity"/>
    <property type="evidence" value="ECO:0007669"/>
    <property type="project" value="UniProtKB-EC"/>
</dbReference>
<dbReference type="GO" id="GO:0000287">
    <property type="term" value="F:magnesium ion binding"/>
    <property type="evidence" value="ECO:0007669"/>
    <property type="project" value="InterPro"/>
</dbReference>
<dbReference type="GO" id="GO:0016102">
    <property type="term" value="P:diterpenoid biosynthetic process"/>
    <property type="evidence" value="ECO:0007669"/>
    <property type="project" value="InterPro"/>
</dbReference>
<dbReference type="CDD" id="cd00684">
    <property type="entry name" value="Terpene_cyclase_plant_C1"/>
    <property type="match status" value="1"/>
</dbReference>
<dbReference type="FunFam" id="1.10.600.10:FF:000007">
    <property type="entry name" value="Isoprene synthase, chloroplastic"/>
    <property type="match status" value="1"/>
</dbReference>
<dbReference type="FunFam" id="1.50.10.130:FF:000001">
    <property type="entry name" value="Isoprene synthase, chloroplastic"/>
    <property type="match status" value="1"/>
</dbReference>
<dbReference type="Gene3D" id="1.10.600.10">
    <property type="entry name" value="Farnesyl Diphosphate Synthase"/>
    <property type="match status" value="1"/>
</dbReference>
<dbReference type="Gene3D" id="1.50.10.130">
    <property type="entry name" value="Terpene synthase, N-terminal domain"/>
    <property type="match status" value="1"/>
</dbReference>
<dbReference type="InterPro" id="IPR008949">
    <property type="entry name" value="Isoprenoid_synthase_dom_sf"/>
</dbReference>
<dbReference type="InterPro" id="IPR034741">
    <property type="entry name" value="Terpene_cyclase-like_1_C"/>
</dbReference>
<dbReference type="InterPro" id="IPR044814">
    <property type="entry name" value="Terpene_cyclase_plant_C1"/>
</dbReference>
<dbReference type="InterPro" id="IPR001906">
    <property type="entry name" value="Terpene_synth_N"/>
</dbReference>
<dbReference type="InterPro" id="IPR036965">
    <property type="entry name" value="Terpene_synth_N_sf"/>
</dbReference>
<dbReference type="InterPro" id="IPR050148">
    <property type="entry name" value="Terpene_synthase-like"/>
</dbReference>
<dbReference type="InterPro" id="IPR005630">
    <property type="entry name" value="Terpene_synthase_metal-bd"/>
</dbReference>
<dbReference type="InterPro" id="IPR008930">
    <property type="entry name" value="Terpenoid_cyclase/PrenylTrfase"/>
</dbReference>
<dbReference type="PANTHER" id="PTHR31225:SF221">
    <property type="entry name" value="(-)-GERMACRENE D SYNTHASE"/>
    <property type="match status" value="1"/>
</dbReference>
<dbReference type="PANTHER" id="PTHR31225">
    <property type="entry name" value="OS04G0344100 PROTEIN-RELATED"/>
    <property type="match status" value="1"/>
</dbReference>
<dbReference type="Pfam" id="PF01397">
    <property type="entry name" value="Terpene_synth"/>
    <property type="match status" value="1"/>
</dbReference>
<dbReference type="Pfam" id="PF03936">
    <property type="entry name" value="Terpene_synth_C"/>
    <property type="match status" value="1"/>
</dbReference>
<dbReference type="SFLD" id="SFLDS00005">
    <property type="entry name" value="Isoprenoid_Synthase_Type_I"/>
    <property type="match status" value="1"/>
</dbReference>
<dbReference type="SFLD" id="SFLDG01019">
    <property type="entry name" value="Terpene_Cyclase_Like_1_C_Termi"/>
    <property type="match status" value="1"/>
</dbReference>
<dbReference type="SUPFAM" id="SSF48239">
    <property type="entry name" value="Terpenoid cyclases/Protein prenyltransferases"/>
    <property type="match status" value="1"/>
</dbReference>
<dbReference type="SUPFAM" id="SSF48576">
    <property type="entry name" value="Terpenoid synthases"/>
    <property type="match status" value="1"/>
</dbReference>
<evidence type="ECO:0000250" key="1"/>
<evidence type="ECO:0000269" key="2">
    <source>
    </source>
</evidence>
<evidence type="ECO:0000305" key="3"/>
<name>GDS_OCIBA</name>